<proteinExistence type="evidence at protein level"/>
<dbReference type="EMBL" id="CH471090">
    <property type="protein sequence ID" value="EAW88365.1"/>
    <property type="molecule type" value="Genomic_DNA"/>
</dbReference>
<dbReference type="EMBL" id="BC009283">
    <property type="protein sequence ID" value="AAH09283.1"/>
    <property type="molecule type" value="mRNA"/>
</dbReference>
<dbReference type="EMBL" id="BC009461">
    <property type="protein sequence ID" value="AAH09461.1"/>
    <property type="molecule type" value="mRNA"/>
</dbReference>
<dbReference type="EMBL" id="BC067786">
    <property type="protein sequence ID" value="AAH67786.1"/>
    <property type="molecule type" value="mRNA"/>
</dbReference>
<dbReference type="CCDS" id="CCDS35185.1"/>
<dbReference type="RefSeq" id="NP_444273.1">
    <property type="nucleotide sequence ID" value="NM_053045.2"/>
</dbReference>
<dbReference type="BioGRID" id="125117">
    <property type="interactions" value="44"/>
</dbReference>
<dbReference type="FunCoup" id="Q969S6">
    <property type="interactions" value="957"/>
</dbReference>
<dbReference type="IntAct" id="Q969S6">
    <property type="interactions" value="37"/>
</dbReference>
<dbReference type="STRING" id="9606.ENSP00000375053"/>
<dbReference type="TCDB" id="8.A.76.1.1">
    <property type="family name" value="the tmem203 or pf14967 (tmem203) family"/>
</dbReference>
<dbReference type="BioMuta" id="TMEM203"/>
<dbReference type="DMDM" id="74731059"/>
<dbReference type="PaxDb" id="9606-ENSP00000375053"/>
<dbReference type="ProteomicsDB" id="75832"/>
<dbReference type="Antibodypedia" id="64518">
    <property type="antibodies" value="3 antibodies from 3 providers"/>
</dbReference>
<dbReference type="DNASU" id="94107"/>
<dbReference type="Ensembl" id="ENST00000343666.6">
    <property type="protein sequence ID" value="ENSP00000375053.4"/>
    <property type="gene ID" value="ENSG00000187713.7"/>
</dbReference>
<dbReference type="GeneID" id="94107"/>
<dbReference type="KEGG" id="hsa:94107"/>
<dbReference type="MANE-Select" id="ENST00000343666.6">
    <property type="protein sequence ID" value="ENSP00000375053.4"/>
    <property type="RefSeq nucleotide sequence ID" value="NM_053045.2"/>
    <property type="RefSeq protein sequence ID" value="NP_444273.1"/>
</dbReference>
<dbReference type="UCSC" id="uc004clv.4">
    <property type="organism name" value="human"/>
</dbReference>
<dbReference type="AGR" id="HGNC:28217"/>
<dbReference type="CTD" id="94107"/>
<dbReference type="DisGeNET" id="94107"/>
<dbReference type="GeneCards" id="TMEM203"/>
<dbReference type="HGNC" id="HGNC:28217">
    <property type="gene designation" value="TMEM203"/>
</dbReference>
<dbReference type="HPA" id="ENSG00000187713">
    <property type="expression patterns" value="Low tissue specificity"/>
</dbReference>
<dbReference type="MalaCards" id="TMEM203"/>
<dbReference type="MIM" id="616499">
    <property type="type" value="gene"/>
</dbReference>
<dbReference type="neXtProt" id="NX_Q969S6"/>
<dbReference type="OpenTargets" id="ENSG00000187713"/>
<dbReference type="PharmGKB" id="PA162406377"/>
<dbReference type="VEuPathDB" id="HostDB:ENSG00000187713"/>
<dbReference type="eggNOG" id="KOG3631">
    <property type="taxonomic scope" value="Eukaryota"/>
</dbReference>
<dbReference type="GeneTree" id="ENSGT00510000049510"/>
<dbReference type="HOGENOM" id="CLU_145619_1_0_1"/>
<dbReference type="InParanoid" id="Q969S6"/>
<dbReference type="OMA" id="LNTYFCA"/>
<dbReference type="OrthoDB" id="6234541at2759"/>
<dbReference type="PAN-GO" id="Q969S6">
    <property type="GO annotations" value="2 GO annotations based on evolutionary models"/>
</dbReference>
<dbReference type="PhylomeDB" id="Q969S6"/>
<dbReference type="TreeFam" id="TF323514"/>
<dbReference type="PathwayCommons" id="Q969S6"/>
<dbReference type="SignaLink" id="Q969S6"/>
<dbReference type="BioGRID-ORCS" id="94107">
    <property type="hits" value="25 hits in 1160 CRISPR screens"/>
</dbReference>
<dbReference type="GenomeRNAi" id="94107"/>
<dbReference type="Pharos" id="Q969S6">
    <property type="development level" value="Tdark"/>
</dbReference>
<dbReference type="PRO" id="PR:Q969S6"/>
<dbReference type="Proteomes" id="UP000005640">
    <property type="component" value="Chromosome 9"/>
</dbReference>
<dbReference type="RNAct" id="Q969S6">
    <property type="molecule type" value="protein"/>
</dbReference>
<dbReference type="Bgee" id="ENSG00000187713">
    <property type="expression patterns" value="Expressed in apex of heart and 98 other cell types or tissues"/>
</dbReference>
<dbReference type="GO" id="GO:0005783">
    <property type="term" value="C:endoplasmic reticulum"/>
    <property type="evidence" value="ECO:0000314"/>
    <property type="project" value="UniProtKB"/>
</dbReference>
<dbReference type="GO" id="GO:0005789">
    <property type="term" value="C:endoplasmic reticulum membrane"/>
    <property type="evidence" value="ECO:0007669"/>
    <property type="project" value="UniProtKB-SubCell"/>
</dbReference>
<dbReference type="GO" id="GO:0005793">
    <property type="term" value="C:endoplasmic reticulum-Golgi intermediate compartment"/>
    <property type="evidence" value="ECO:0007669"/>
    <property type="project" value="UniProtKB-SubCell"/>
</dbReference>
<dbReference type="GO" id="GO:0005765">
    <property type="term" value="C:lysosomal membrane"/>
    <property type="evidence" value="ECO:0007669"/>
    <property type="project" value="UniProtKB-SubCell"/>
</dbReference>
<dbReference type="GO" id="GO:0006874">
    <property type="term" value="P:intracellular calcium ion homeostasis"/>
    <property type="evidence" value="ECO:0000314"/>
    <property type="project" value="UniProtKB"/>
</dbReference>
<dbReference type="GO" id="GO:0007283">
    <property type="term" value="P:spermatogenesis"/>
    <property type="evidence" value="ECO:0000250"/>
    <property type="project" value="UniProtKB"/>
</dbReference>
<dbReference type="CDD" id="cd22816">
    <property type="entry name" value="TMEM203"/>
    <property type="match status" value="1"/>
</dbReference>
<dbReference type="InterPro" id="IPR019396">
    <property type="entry name" value="TM_Fragile-X-F-assoc"/>
</dbReference>
<dbReference type="PANTHER" id="PTHR13568">
    <property type="entry name" value="FAM11A, B PROTEIN"/>
    <property type="match status" value="1"/>
</dbReference>
<dbReference type="PANTHER" id="PTHR13568:SF9">
    <property type="entry name" value="TRANSMEMBRANE PROTEIN 203"/>
    <property type="match status" value="1"/>
</dbReference>
<feature type="chain" id="PRO_0000317203" description="Transmembrane protein 203">
    <location>
        <begin position="1"/>
        <end position="136"/>
    </location>
</feature>
<feature type="transmembrane region" description="Helical" evidence="2">
    <location>
        <begin position="14"/>
        <end position="34"/>
    </location>
</feature>
<feature type="transmembrane region" description="Helical" evidence="2">
    <location>
        <begin position="50"/>
        <end position="72"/>
    </location>
</feature>
<feature type="transmembrane region" description="Helical" evidence="2">
    <location>
        <begin position="81"/>
        <end position="101"/>
    </location>
</feature>
<feature type="transmembrane region" description="Helical" evidence="2">
    <location>
        <begin position="112"/>
        <end position="132"/>
    </location>
</feature>
<feature type="region of interest" description="Interaction with STING1" evidence="1">
    <location>
        <begin position="1"/>
        <end position="51"/>
    </location>
</feature>
<feature type="region of interest" description="Required for the lysosomal localization of the STING-TMEM203 complex" evidence="1">
    <location>
        <begin position="52"/>
        <end position="136"/>
    </location>
</feature>
<feature type="sequence conflict" description="In Ref. 2; AAH67786." evidence="5" ref="2">
    <original>V</original>
    <variation>F</variation>
    <location>
        <position position="96"/>
    </location>
</feature>
<sequence length="136" mass="15760">MLFSLRELVQWLGFATFEIFVHLLALLVFSVLLALRVDGLVPGLSWWNVFVPFFAADGLSTYFTTIVSVRLFQDGEKRLAVLRLFWVLTVLSLKFVFEMLLCQKLAEQTRELWFGLITSPLFILLQLLMIRACRVN</sequence>
<gene>
    <name type="primary">TMEM203</name>
</gene>
<organism>
    <name type="scientific">Homo sapiens</name>
    <name type="common">Human</name>
    <dbReference type="NCBI Taxonomy" id="9606"/>
    <lineage>
        <taxon>Eukaryota</taxon>
        <taxon>Metazoa</taxon>
        <taxon>Chordata</taxon>
        <taxon>Craniata</taxon>
        <taxon>Vertebrata</taxon>
        <taxon>Euteleostomi</taxon>
        <taxon>Mammalia</taxon>
        <taxon>Eutheria</taxon>
        <taxon>Euarchontoglires</taxon>
        <taxon>Primates</taxon>
        <taxon>Haplorrhini</taxon>
        <taxon>Catarrhini</taxon>
        <taxon>Hominidae</taxon>
        <taxon>Homo</taxon>
    </lineage>
</organism>
<accession>Q969S6</accession>
<accession>Q6NW08</accession>
<name>TM203_HUMAN</name>
<protein>
    <recommendedName>
        <fullName>Transmembrane protein 203</fullName>
    </recommendedName>
</protein>
<evidence type="ECO:0000250" key="1">
    <source>
        <dbReference type="UniProtKB" id="Q8R235"/>
    </source>
</evidence>
<evidence type="ECO:0000255" key="2"/>
<evidence type="ECO:0000269" key="3">
    <source>
    </source>
</evidence>
<evidence type="ECO:0000269" key="4">
    <source>
    </source>
</evidence>
<evidence type="ECO:0000305" key="5"/>
<comment type="function">
    <text evidence="1 3 4">Involved in the regulation of cellular calcium homeotasis (PubMed:25996873). Required for spermatogenesis (PubMed:25996873). Acts as a regulator of STING-mediated inflammatory signaling in macrophages (PubMed:31346090). Forms a complex with STING, promoting the activity of TBK1 kinase and the transcription factor IRF3, leading to activation of type I interferon expression (By similarity).</text>
</comment>
<comment type="subunit">
    <text evidence="1 3">Homodimer (By similarity). Interacts with ATP2A2, ITPR3 and STIM1 (PubMed:25996873). Interacts with STING1 (via transmembrane domain) (By similarity).</text>
</comment>
<comment type="interaction">
    <interactant intactId="EBI-12274070">
        <id>Q969S6</id>
    </interactant>
    <interactant intactId="EBI-941819">
        <id>P16157-17</id>
        <label>ANK1</label>
    </interactant>
    <organismsDiffer>false</organismsDiffer>
    <experiments>3</experiments>
</comment>
<comment type="interaction">
    <interactant intactId="EBI-12274070">
        <id>Q969S6</id>
    </interactant>
    <interactant intactId="EBI-13059134">
        <id>Q13520</id>
        <label>AQP6</label>
    </interactant>
    <organismsDiffer>false</organismsDiffer>
    <experiments>3</experiments>
</comment>
<comment type="interaction">
    <interactant intactId="EBI-12274070">
        <id>Q969S6</id>
    </interactant>
    <interactant intactId="EBI-2512037">
        <id>O75787</id>
        <label>ATP6AP2</label>
    </interactant>
    <organismsDiffer>false</organismsDiffer>
    <experiments>3</experiments>
</comment>
<comment type="interaction">
    <interactant intactId="EBI-12274070">
        <id>Q969S6</id>
    </interactant>
    <interactant intactId="EBI-3862428">
        <id>P09693</id>
        <label>CD3G</label>
    </interactant>
    <organismsDiffer>false</organismsDiffer>
    <experiments>3</experiments>
</comment>
<comment type="interaction">
    <interactant intactId="EBI-12274070">
        <id>Q969S6</id>
    </interactant>
    <interactant intactId="EBI-2835940">
        <id>P34972</id>
        <label>CNR2</label>
    </interactant>
    <organismsDiffer>false</organismsDiffer>
    <experiments>3</experiments>
</comment>
<comment type="interaction">
    <interactant intactId="EBI-12274070">
        <id>Q969S6</id>
    </interactant>
    <interactant intactId="EBI-18013275">
        <id>Q7Z7G2</id>
        <label>CPLX4</label>
    </interactant>
    <organismsDiffer>false</organismsDiffer>
    <experiments>3</experiments>
</comment>
<comment type="interaction">
    <interactant intactId="EBI-12274070">
        <id>Q969S6</id>
    </interactant>
    <interactant intactId="EBI-6942903">
        <id>Q96BA8</id>
        <label>CREB3L1</label>
    </interactant>
    <organismsDiffer>false</organismsDiffer>
    <experiments>3</experiments>
</comment>
<comment type="interaction">
    <interactant intactId="EBI-12274070">
        <id>Q969S6</id>
    </interactant>
    <interactant intactId="EBI-3915253">
        <id>Q15125</id>
        <label>EBP</label>
    </interactant>
    <organismsDiffer>false</organismsDiffer>
    <experiments>3</experiments>
</comment>
<comment type="interaction">
    <interactant intactId="EBI-12274070">
        <id>Q969S6</id>
    </interactant>
    <interactant intactId="EBI-18535450">
        <id>Q9GZR5</id>
        <label>ELOVL4</label>
    </interactant>
    <organismsDiffer>false</organismsDiffer>
    <experiments>3</experiments>
</comment>
<comment type="interaction">
    <interactant intactId="EBI-12274070">
        <id>Q969S6</id>
    </interactant>
    <interactant intactId="EBI-781551">
        <id>Q9Y282</id>
        <label>ERGIC3</label>
    </interactant>
    <organismsDiffer>false</organismsDiffer>
    <experiments>3</experiments>
</comment>
<comment type="interaction">
    <interactant intactId="EBI-12274070">
        <id>Q969S6</id>
    </interactant>
    <interactant intactId="EBI-18636064">
        <id>Q8TBP5</id>
        <label>FAM174A</label>
    </interactant>
    <organismsDiffer>false</organismsDiffer>
    <experiments>3</experiments>
</comment>
<comment type="interaction">
    <interactant intactId="EBI-12274070">
        <id>Q969S6</id>
    </interactant>
    <interactant intactId="EBI-18304435">
        <id>Q5JX71</id>
        <label>FAM209A</label>
    </interactant>
    <organismsDiffer>false</organismsDiffer>
    <experiments>3</experiments>
</comment>
<comment type="interaction">
    <interactant intactId="EBI-12274070">
        <id>Q969S6</id>
    </interactant>
    <interactant intactId="EBI-2833872">
        <id>O15552</id>
        <label>FFAR2</label>
    </interactant>
    <organismsDiffer>false</organismsDiffer>
    <experiments>3</experiments>
</comment>
<comment type="interaction">
    <interactant intactId="EBI-12274070">
        <id>Q969S6</id>
    </interactant>
    <interactant intactId="EBI-1052304">
        <id>Q8NBQ5</id>
        <label>HSD17B11</label>
    </interactant>
    <organismsDiffer>false</organismsDiffer>
    <experiments>3</experiments>
</comment>
<comment type="interaction">
    <interactant intactId="EBI-12274070">
        <id>Q969S6</id>
    </interactant>
    <interactant intactId="EBI-18053395">
        <id>Q7Z5P4</id>
        <label>HSD17B13</label>
    </interactant>
    <organismsDiffer>false</organismsDiffer>
    <experiments>3</experiments>
</comment>
<comment type="interaction">
    <interactant intactId="EBI-12274070">
        <id>Q969S6</id>
    </interactant>
    <interactant intactId="EBI-12017638">
        <id>P48051</id>
        <label>KCNJ6</label>
    </interactant>
    <organismsDiffer>false</organismsDiffer>
    <experiments>3</experiments>
</comment>
<comment type="interaction">
    <interactant intactId="EBI-12274070">
        <id>Q969S6</id>
    </interactant>
    <interactant intactId="EBI-9088345">
        <id>O95867</id>
        <label>LY6G6C</label>
    </interactant>
    <organismsDiffer>false</organismsDiffer>
    <experiments>3</experiments>
</comment>
<comment type="interaction">
    <interactant intactId="EBI-12274070">
        <id>Q969S6</id>
    </interactant>
    <interactant intactId="EBI-3867271">
        <id>Q9NQG1</id>
        <label>MANBAL</label>
    </interactant>
    <organismsDiffer>false</organismsDiffer>
    <experiments>3</experiments>
</comment>
<comment type="interaction">
    <interactant intactId="EBI-12274070">
        <id>Q969S6</id>
    </interactant>
    <interactant intactId="EBI-3920969">
        <id>Q6N075</id>
        <label>MFSD5</label>
    </interactant>
    <organismsDiffer>false</organismsDiffer>
    <experiments>3</experiments>
</comment>
<comment type="interaction">
    <interactant intactId="EBI-12274070">
        <id>Q969S6</id>
    </interactant>
    <interactant intactId="EBI-17873222">
        <id>Q15546</id>
        <label>MMD</label>
    </interactant>
    <organismsDiffer>false</organismsDiffer>
    <experiments>3</experiments>
</comment>
<comment type="interaction">
    <interactant intactId="EBI-12274070">
        <id>Q969S6</id>
    </interactant>
    <interactant intactId="EBI-716063">
        <id>Q13113</id>
        <label>PDZK1IP1</label>
    </interactant>
    <organismsDiffer>false</organismsDiffer>
    <experiments>3</experiments>
</comment>
<comment type="interaction">
    <interactant intactId="EBI-12274070">
        <id>Q969S6</id>
    </interactant>
    <interactant intactId="EBI-10192441">
        <id>Q86VR2</id>
        <label>RETREG3</label>
    </interactant>
    <organismsDiffer>false</organismsDiffer>
    <experiments>3</experiments>
</comment>
<comment type="interaction">
    <interactant intactId="EBI-12274070">
        <id>Q969S6</id>
    </interactant>
    <interactant intactId="EBI-1056589">
        <id>Q96TC7</id>
        <label>RMDN3</label>
    </interactant>
    <organismsDiffer>false</organismsDiffer>
    <experiments>3</experiments>
</comment>
<comment type="interaction">
    <interactant intactId="EBI-12274070">
        <id>Q969S6</id>
    </interactant>
    <interactant intactId="EBI-18397230">
        <id>Q6P5S7</id>
        <label>RNASEK</label>
    </interactant>
    <organismsDiffer>false</organismsDiffer>
    <experiments>3</experiments>
</comment>
<comment type="interaction">
    <interactant intactId="EBI-12274070">
        <id>Q969S6</id>
    </interactant>
    <interactant intactId="EBI-18159983">
        <id>Q3KNW5</id>
        <label>SLC10A6</label>
    </interactant>
    <organismsDiffer>false</organismsDiffer>
    <experiments>3</experiments>
</comment>
<comment type="interaction">
    <interactant intactId="EBI-12274070">
        <id>Q969S6</id>
    </interactant>
    <interactant intactId="EBI-17595455">
        <id>P54219-3</id>
        <label>SLC18A1</label>
    </interactant>
    <organismsDiffer>false</organismsDiffer>
    <experiments>3</experiments>
</comment>
<comment type="interaction">
    <interactant intactId="EBI-12274070">
        <id>Q969S6</id>
    </interactant>
    <interactant intactId="EBI-17280858">
        <id>Q8WWF3</id>
        <label>SSMEM1</label>
    </interactant>
    <organismsDiffer>false</organismsDiffer>
    <experiments>3</experiments>
</comment>
<comment type="interaction">
    <interactant intactId="EBI-12274070">
        <id>Q969S6</id>
    </interactant>
    <interactant intactId="EBI-1211440">
        <id>P27105</id>
        <label>STOM</label>
    </interactant>
    <organismsDiffer>false</organismsDiffer>
    <experiments>3</experiments>
</comment>
<comment type="interaction">
    <interactant intactId="EBI-12274070">
        <id>Q969S6</id>
    </interactant>
    <interactant intactId="EBI-744942">
        <id>Q12846</id>
        <label>STX4</label>
    </interactant>
    <organismsDiffer>false</organismsDiffer>
    <experiments>3</experiments>
</comment>
<comment type="interaction">
    <interactant intactId="EBI-12274070">
        <id>Q969S6</id>
    </interactant>
    <interactant intactId="EBI-6268651">
        <id>Q9NPL8</id>
        <label>TIMMDC1</label>
    </interactant>
    <organismsDiffer>false</organismsDiffer>
    <experiments>3</experiments>
</comment>
<comment type="interaction">
    <interactant intactId="EBI-12274070">
        <id>Q969S6</id>
    </interactant>
    <interactant intactId="EBI-8638294">
        <id>Q9NUH8</id>
        <label>TMEM14B</label>
    </interactant>
    <organismsDiffer>false</organismsDiffer>
    <experiments>3</experiments>
</comment>
<comment type="interaction">
    <interactant intactId="EBI-12274070">
        <id>Q969S6</id>
    </interactant>
    <interactant intactId="EBI-8642211">
        <id>Q8WY98</id>
        <label>TMEM234</label>
    </interactant>
    <organismsDiffer>false</organismsDiffer>
    <experiments>3</experiments>
</comment>
<comment type="interaction">
    <interactant intactId="EBI-12274070">
        <id>Q969S6</id>
    </interactant>
    <interactant intactId="EBI-18178701">
        <id>Q4KMG9</id>
        <label>TMEM52B</label>
    </interactant>
    <organismsDiffer>false</organismsDiffer>
    <experiments>3</experiments>
</comment>
<comment type="interaction">
    <interactant intactId="EBI-12274070">
        <id>Q969S6</id>
    </interactant>
    <interactant intactId="EBI-2852148">
        <id>Q9H2L4</id>
        <label>TMEM60</label>
    </interactant>
    <organismsDiffer>false</organismsDiffer>
    <experiments>3</experiments>
</comment>
<comment type="interaction">
    <interactant intactId="EBI-12274070">
        <id>Q969S6</id>
    </interactant>
    <interactant intactId="EBI-2548832">
        <id>Q8N661</id>
        <label>TMEM86B</label>
    </interactant>
    <organismsDiffer>false</organismsDiffer>
    <experiments>3</experiments>
</comment>
<comment type="interaction">
    <interactant intactId="EBI-12274070">
        <id>Q969S6</id>
    </interactant>
    <interactant intactId="EBI-6447886">
        <id>Q9Y320</id>
        <label>TMX2</label>
    </interactant>
    <organismsDiffer>false</organismsDiffer>
    <experiments>3</experiments>
</comment>
<comment type="subcellular location">
    <subcellularLocation>
        <location evidence="3">Endoplasmic reticulum membrane</location>
        <topology evidence="2">Multi-pass membrane protein</topology>
    </subcellularLocation>
    <subcellularLocation>
        <location evidence="1">Endoplasmic reticulum-Golgi intermediate compartment</location>
    </subcellularLocation>
    <subcellularLocation>
        <location evidence="1">Lysosome membrane</location>
        <topology evidence="2">Multi-pass membrane protein</topology>
    </subcellularLocation>
    <text evidence="1">Co-localizes with STING1 in the lysosome membrane, mediates lysosomal localization of STING1.</text>
</comment>
<comment type="tissue specificity">
    <text evidence="3">Increased expression seen in T-lymphocytes from patients with systemic lupus erythematosus (SLE).</text>
</comment>
<reference key="1">
    <citation type="submission" date="2005-07" db="EMBL/GenBank/DDBJ databases">
        <authorList>
            <person name="Mural R.J."/>
            <person name="Istrail S."/>
            <person name="Sutton G.G."/>
            <person name="Florea L."/>
            <person name="Halpern A.L."/>
            <person name="Mobarry C.M."/>
            <person name="Lippert R."/>
            <person name="Walenz B."/>
            <person name="Shatkay H."/>
            <person name="Dew I."/>
            <person name="Miller J.R."/>
            <person name="Flanigan M.J."/>
            <person name="Edwards N.J."/>
            <person name="Bolanos R."/>
            <person name="Fasulo D."/>
            <person name="Halldorsson B.V."/>
            <person name="Hannenhalli S."/>
            <person name="Turner R."/>
            <person name="Yooseph S."/>
            <person name="Lu F."/>
            <person name="Nusskern D.R."/>
            <person name="Shue B.C."/>
            <person name="Zheng X.H."/>
            <person name="Zhong F."/>
            <person name="Delcher A.L."/>
            <person name="Huson D.H."/>
            <person name="Kravitz S.A."/>
            <person name="Mouchard L."/>
            <person name="Reinert K."/>
            <person name="Remington K.A."/>
            <person name="Clark A.G."/>
            <person name="Waterman M.S."/>
            <person name="Eichler E.E."/>
            <person name="Adams M.D."/>
            <person name="Hunkapiller M.W."/>
            <person name="Myers E.W."/>
            <person name="Venter J.C."/>
        </authorList>
    </citation>
    <scope>NUCLEOTIDE SEQUENCE [LARGE SCALE GENOMIC DNA]</scope>
</reference>
<reference key="2">
    <citation type="journal article" date="2004" name="Genome Res.">
        <title>The status, quality, and expansion of the NIH full-length cDNA project: the Mammalian Gene Collection (MGC).</title>
        <authorList>
            <consortium name="The MGC Project Team"/>
        </authorList>
    </citation>
    <scope>NUCLEOTIDE SEQUENCE [LARGE SCALE MRNA]</scope>
    <source>
        <tissue>Brain</tissue>
        <tissue>Lung</tissue>
        <tissue>Uterus</tissue>
    </source>
</reference>
<reference key="3">
    <citation type="journal article" date="2015" name="PLoS ONE">
        <title>TMEM203 is a novel regulator of intracellular calcium homeostasis and is required for spermatogenesis.</title>
        <authorList>
            <person name="Shambharkar P.B."/>
            <person name="Bittinger M."/>
            <person name="Latario B."/>
            <person name="Xiong Z."/>
            <person name="Bandyopadhyay S."/>
            <person name="Davis V."/>
            <person name="Lin V."/>
            <person name="Yang Y."/>
            <person name="Valdez R."/>
            <person name="Labow M.A."/>
        </authorList>
    </citation>
    <scope>FUNCTION</scope>
    <scope>SUBCELLULAR LOCATION</scope>
    <scope>INTERACTION WITH ATP2A2; ITPR3 AND STIM1</scope>
</reference>
<reference key="4">
    <citation type="journal article" date="2019" name="Proc. Natl. Acad. Sci. U.S.A.">
        <title>TMEM203 is a binding partner and regulator of STING-mediated inflammatory signaling in macrophages.</title>
        <authorList>
            <person name="Li Y."/>
            <person name="James S.J."/>
            <person name="Wyllie D.H."/>
            <person name="Wynne C."/>
            <person name="Czibula A."/>
            <person name="Bukhari A."/>
            <person name="Pye K."/>
            <person name="Bte Mustafah S.M."/>
            <person name="Fajka-Boja R."/>
            <person name="Szabo E."/>
            <person name="Angyal A."/>
            <person name="Hegedus Z."/>
            <person name="Kovacs L."/>
            <person name="Hill A.V.S."/>
            <person name="Jefferies C.A."/>
            <person name="Wilson H.L."/>
            <person name="Yongliang Z."/>
            <person name="Kiss-Toth E."/>
        </authorList>
    </citation>
    <scope>FUNCTION</scope>
    <scope>TISSUE SPECIFICITY</scope>
</reference>
<keyword id="KW-0256">Endoplasmic reticulum</keyword>
<keyword id="KW-0458">Lysosome</keyword>
<keyword id="KW-0472">Membrane</keyword>
<keyword id="KW-1185">Reference proteome</keyword>
<keyword id="KW-0812">Transmembrane</keyword>
<keyword id="KW-1133">Transmembrane helix</keyword>